<gene>
    <name evidence="1" type="primary">ETFB</name>
</gene>
<protein>
    <recommendedName>
        <fullName evidence="4">Electron transfer flavoprotein subunit beta</fullName>
        <shortName evidence="1">Beta-ETF</shortName>
    </recommendedName>
</protein>
<keyword id="KW-0007">Acetylation</keyword>
<keyword id="KW-0903">Direct protein sequencing</keyword>
<keyword id="KW-0249">Electron transport</keyword>
<keyword id="KW-0488">Methylation</keyword>
<keyword id="KW-0496">Mitochondrion</keyword>
<keyword id="KW-0547">Nucleotide-binding</keyword>
<keyword id="KW-0597">Phosphoprotein</keyword>
<keyword id="KW-1185">Reference proteome</keyword>
<keyword id="KW-0813">Transport</keyword>
<sequence>MAELRALVAVKRVIDFAVKIRVKPDKTGVVTDGVKHSMNPFCEIAVEEAVRLKEKKLVKEIIAVSCGPAQCQETIRTALAMGADRGIHVEVPAAEANHLGPLQVARVLAKLAEKEKVDLVLLGKQAIDDDCNQTGQMTAGFLDWPQGTFASQVTLEGDKIKVEREIDGGLETLRLKLPAVVTADLRLNEPRYATLPNIMKAKKKKIEVIKAGDLGVDLTSKLSVISVEDPPQRTAGVKVETTEDLVAKLKEIGRI</sequence>
<accession>Q2TBV3</accession>
<evidence type="ECO:0000250" key="1">
    <source>
        <dbReference type="UniProtKB" id="P38117"/>
    </source>
</evidence>
<evidence type="ECO:0000250" key="2">
    <source>
        <dbReference type="UniProtKB" id="Q9DCW4"/>
    </source>
</evidence>
<evidence type="ECO:0000269" key="3">
    <source>
    </source>
</evidence>
<evidence type="ECO:0000305" key="4"/>
<evidence type="ECO:0000305" key="5">
    <source>
    </source>
</evidence>
<proteinExistence type="evidence at protein level"/>
<comment type="function">
    <text evidence="1">Heterodimeric electron transfer flavoprotein that accepts electrons from several mitochondrial dehydrogenases, including acyl-CoA dehydrogenases, glutaryl-CoA and sarcosine dehydrogenase. It transfers the electrons to the main mitochondrial respiratory chain via ETF-ubiquinone oxidoreductase. Required for normal mitochondrial fatty acid oxidation and normal amino acid metabolism. ETFB binds an AMP molecule that probably has a purely structural role.</text>
</comment>
<comment type="subunit">
    <text evidence="1">Heterodimer composed of ETFA and ETFB. Identified in a complex that contains ETFA, ETFB and ETFRF1. Interacts with ACADM.</text>
</comment>
<comment type="subcellular location">
    <subcellularLocation>
        <location evidence="5">Mitochondrion matrix</location>
    </subcellularLocation>
</comment>
<comment type="domain">
    <text evidence="1">The recognition loop recognizes a hydrophobic patch at the surface of interacting dehydrogenases and acts as a static anchor at the interface.</text>
</comment>
<comment type="PTM">
    <text evidence="1 3">Methylated (PubMed:25023281). Trimethylation at Lys-200 and Lys-203 may negatively regulate the activity in electron transfer from acyl-CoA dehydrogenases.</text>
</comment>
<comment type="similarity">
    <text evidence="4">Belongs to the ETF beta-subunit/FixA family.</text>
</comment>
<reference key="1">
    <citation type="submission" date="2005-11" db="EMBL/GenBank/DDBJ databases">
        <authorList>
            <consortium name="NIH - Mammalian Gene Collection (MGC) project"/>
        </authorList>
    </citation>
    <scope>NUCLEOTIDE SEQUENCE [LARGE SCALE MRNA]</scope>
    <source>
        <strain>Crossbred X Angus</strain>
        <tissue>Liver</tissue>
    </source>
</reference>
<reference key="2">
    <citation type="journal article" date="2014" name="J. Biol. Chem.">
        <title>Human METTL20 methylates lysine residues adjacent to the recognition loop of the electron transfer flavoprotein in mitochondria.</title>
        <authorList>
            <person name="Rhein V.F."/>
            <person name="Carroll J."/>
            <person name="He J."/>
            <person name="Ding S."/>
            <person name="Fearnley I.M."/>
            <person name="Walker J.E."/>
        </authorList>
    </citation>
    <scope>PROTEIN SEQUENCE OF 2-14</scope>
    <scope>SUBCELLULAR LOCATION</scope>
    <scope>CLEAVAGE OF INITIATOR METHIONINE</scope>
    <scope>ACETYLATION AT ALA-2</scope>
    <scope>METHYLATION AT LYS-200 AND LYS-203</scope>
</reference>
<dbReference type="EMBL" id="BC109603">
    <property type="protein sequence ID" value="AAI09604.1"/>
    <property type="molecule type" value="mRNA"/>
</dbReference>
<dbReference type="RefSeq" id="NP_001033671.1">
    <property type="nucleotide sequence ID" value="NM_001038582.1"/>
</dbReference>
<dbReference type="SMR" id="Q2TBV3"/>
<dbReference type="FunCoup" id="Q2TBV3">
    <property type="interactions" value="1840"/>
</dbReference>
<dbReference type="iPTMnet" id="Q2TBV3"/>
<dbReference type="PaxDb" id="9913-ENSBTAP00000027250"/>
<dbReference type="PeptideAtlas" id="Q2TBV3"/>
<dbReference type="GeneID" id="617210"/>
<dbReference type="KEGG" id="bta:617210"/>
<dbReference type="CTD" id="2109"/>
<dbReference type="eggNOG" id="KOG3180">
    <property type="taxonomic scope" value="Eukaryota"/>
</dbReference>
<dbReference type="HOGENOM" id="CLU_060196_0_0_1"/>
<dbReference type="InParanoid" id="Q2TBV3"/>
<dbReference type="OrthoDB" id="276685at2759"/>
<dbReference type="TreeFam" id="TF314039"/>
<dbReference type="Proteomes" id="UP000009136">
    <property type="component" value="Unplaced"/>
</dbReference>
<dbReference type="GO" id="GO:0005759">
    <property type="term" value="C:mitochondrial matrix"/>
    <property type="evidence" value="ECO:0000250"/>
    <property type="project" value="UniProtKB"/>
</dbReference>
<dbReference type="GO" id="GO:0005739">
    <property type="term" value="C:mitochondrion"/>
    <property type="evidence" value="ECO:0000318"/>
    <property type="project" value="GO_Central"/>
</dbReference>
<dbReference type="GO" id="GO:0009055">
    <property type="term" value="F:electron transfer activity"/>
    <property type="evidence" value="ECO:0000250"/>
    <property type="project" value="UniProtKB"/>
</dbReference>
<dbReference type="GO" id="GO:0000166">
    <property type="term" value="F:nucleotide binding"/>
    <property type="evidence" value="ECO:0007669"/>
    <property type="project" value="UniProtKB-KW"/>
</dbReference>
<dbReference type="GO" id="GO:0033539">
    <property type="term" value="P:fatty acid beta-oxidation using acyl-CoA dehydrogenase"/>
    <property type="evidence" value="ECO:0000250"/>
    <property type="project" value="UniProtKB"/>
</dbReference>
<dbReference type="CDD" id="cd01714">
    <property type="entry name" value="ETF_beta"/>
    <property type="match status" value="1"/>
</dbReference>
<dbReference type="FunFam" id="3.40.50.620:FF:000011">
    <property type="entry name" value="Electron transfer flavoprotein subunit beta"/>
    <property type="match status" value="1"/>
</dbReference>
<dbReference type="Gene3D" id="3.40.50.620">
    <property type="entry name" value="HUPs"/>
    <property type="match status" value="1"/>
</dbReference>
<dbReference type="InterPro" id="IPR000049">
    <property type="entry name" value="ET-Flavoprotein_bsu_CS"/>
</dbReference>
<dbReference type="InterPro" id="IPR014730">
    <property type="entry name" value="ETF_a/b_N"/>
</dbReference>
<dbReference type="InterPro" id="IPR012255">
    <property type="entry name" value="ETF_b"/>
</dbReference>
<dbReference type="InterPro" id="IPR033948">
    <property type="entry name" value="ETF_beta_N"/>
</dbReference>
<dbReference type="InterPro" id="IPR014729">
    <property type="entry name" value="Rossmann-like_a/b/a_fold"/>
</dbReference>
<dbReference type="PANTHER" id="PTHR21294">
    <property type="entry name" value="ELECTRON TRANSFER FLAVOPROTEIN BETA-SUBUNIT"/>
    <property type="match status" value="1"/>
</dbReference>
<dbReference type="PANTHER" id="PTHR21294:SF8">
    <property type="entry name" value="ELECTRON TRANSFER FLAVOPROTEIN SUBUNIT BETA"/>
    <property type="match status" value="1"/>
</dbReference>
<dbReference type="Pfam" id="PF01012">
    <property type="entry name" value="ETF"/>
    <property type="match status" value="1"/>
</dbReference>
<dbReference type="PIRSF" id="PIRSF000090">
    <property type="entry name" value="Beta-ETF"/>
    <property type="match status" value="1"/>
</dbReference>
<dbReference type="SMART" id="SM00893">
    <property type="entry name" value="ETF"/>
    <property type="match status" value="1"/>
</dbReference>
<dbReference type="SUPFAM" id="SSF52402">
    <property type="entry name" value="Adenine nucleotide alpha hydrolases-like"/>
    <property type="match status" value="1"/>
</dbReference>
<dbReference type="PROSITE" id="PS01065">
    <property type="entry name" value="ETF_BETA"/>
    <property type="match status" value="1"/>
</dbReference>
<organism>
    <name type="scientific">Bos taurus</name>
    <name type="common">Bovine</name>
    <dbReference type="NCBI Taxonomy" id="9913"/>
    <lineage>
        <taxon>Eukaryota</taxon>
        <taxon>Metazoa</taxon>
        <taxon>Chordata</taxon>
        <taxon>Craniata</taxon>
        <taxon>Vertebrata</taxon>
        <taxon>Euteleostomi</taxon>
        <taxon>Mammalia</taxon>
        <taxon>Eutheria</taxon>
        <taxon>Laurasiatheria</taxon>
        <taxon>Artiodactyla</taxon>
        <taxon>Ruminantia</taxon>
        <taxon>Pecora</taxon>
        <taxon>Bovidae</taxon>
        <taxon>Bovinae</taxon>
        <taxon>Bos</taxon>
    </lineage>
</organism>
<name>ETFB_BOVIN</name>
<feature type="initiator methionine" description="Removed" evidence="3">
    <location>
        <position position="1"/>
    </location>
</feature>
<feature type="chain" id="PRO_0000231524" description="Electron transfer flavoprotein subunit beta">
    <location>
        <begin position="2"/>
        <end position="255"/>
    </location>
</feature>
<feature type="region of interest" description="Recognition loop" evidence="1">
    <location>
        <begin position="183"/>
        <end position="205"/>
    </location>
</feature>
<feature type="binding site" evidence="1">
    <location>
        <position position="9"/>
    </location>
    <ligand>
        <name>AMP</name>
        <dbReference type="ChEBI" id="CHEBI:456215"/>
    </ligand>
</feature>
<feature type="binding site" evidence="1">
    <location>
        <begin position="39"/>
        <end position="42"/>
    </location>
    <ligand>
        <name>AMP</name>
        <dbReference type="ChEBI" id="CHEBI:456215"/>
    </ligand>
</feature>
<feature type="binding site" evidence="1">
    <location>
        <position position="66"/>
    </location>
    <ligand>
        <name>AMP</name>
        <dbReference type="ChEBI" id="CHEBI:456215"/>
    </ligand>
</feature>
<feature type="binding site" evidence="1">
    <location>
        <begin position="123"/>
        <end position="134"/>
    </location>
    <ligand>
        <name>AMP</name>
        <dbReference type="ChEBI" id="CHEBI:456215"/>
    </ligand>
</feature>
<feature type="modified residue" description="N-acetylalanine" evidence="3">
    <location>
        <position position="2"/>
    </location>
</feature>
<feature type="modified residue" description="N6,N6,N6-trimethyllysine; by ETFBKMT; alternate" evidence="3">
    <location>
        <position position="200"/>
    </location>
</feature>
<feature type="modified residue" description="N6-acetyllysine; alternate" evidence="2">
    <location>
        <position position="200"/>
    </location>
</feature>
<feature type="modified residue" description="N6-methyllysine; alternate" evidence="1">
    <location>
        <position position="200"/>
    </location>
</feature>
<feature type="modified residue" description="N6,N6,N6-trimethyllysine; by ETFBKMT" evidence="3">
    <location>
        <position position="203"/>
    </location>
</feature>
<feature type="modified residue" description="N6-acetyllysine; alternate" evidence="2">
    <location>
        <position position="210"/>
    </location>
</feature>
<feature type="modified residue" description="N6-succinyllysine; alternate" evidence="2">
    <location>
        <position position="210"/>
    </location>
</feature>
<feature type="modified residue" description="Phosphoserine" evidence="1">
    <location>
        <position position="223"/>
    </location>
</feature>
<feature type="modified residue" description="Phosphoserine" evidence="1">
    <location>
        <position position="226"/>
    </location>
</feature>
<feature type="modified residue" description="N6-acetyllysine" evidence="2">
    <location>
        <position position="238"/>
    </location>
</feature>
<feature type="modified residue" description="N6-acetyllysine; alternate" evidence="2">
    <location>
        <position position="248"/>
    </location>
</feature>
<feature type="modified residue" description="N6-succinyllysine; alternate" evidence="2">
    <location>
        <position position="248"/>
    </location>
</feature>